<proteinExistence type="inferred from homology"/>
<dbReference type="EC" id="5.1.3.24" evidence="1"/>
<dbReference type="EMBL" id="CP000671">
    <property type="protein sequence ID" value="ABQ97954.1"/>
    <property type="molecule type" value="Genomic_DNA"/>
</dbReference>
<dbReference type="SMR" id="A5UB03"/>
<dbReference type="KEGG" id="hip:CGSHiEE_02545"/>
<dbReference type="HOGENOM" id="CLU_061535_0_0_6"/>
<dbReference type="GO" id="GO:0042597">
    <property type="term" value="C:periplasmic space"/>
    <property type="evidence" value="ECO:0007669"/>
    <property type="project" value="UniProtKB-SubCell"/>
</dbReference>
<dbReference type="GO" id="GO:0016857">
    <property type="term" value="F:racemase and epimerase activity, acting on carbohydrates and derivatives"/>
    <property type="evidence" value="ECO:0007669"/>
    <property type="project" value="UniProtKB-UniRule"/>
</dbReference>
<dbReference type="Gene3D" id="2.120.10.80">
    <property type="entry name" value="Kelch-type beta propeller"/>
    <property type="match status" value="2"/>
</dbReference>
<dbReference type="HAMAP" id="MF_01195">
    <property type="entry name" value="NanM"/>
    <property type="match status" value="1"/>
</dbReference>
<dbReference type="InterPro" id="IPR015915">
    <property type="entry name" value="Kelch-typ_b-propeller"/>
</dbReference>
<dbReference type="InterPro" id="IPR056734">
    <property type="entry name" value="NANM"/>
</dbReference>
<dbReference type="InterPro" id="IPR019936">
    <property type="entry name" value="NanM_proteobact"/>
</dbReference>
<dbReference type="NCBIfam" id="TIGR03547">
    <property type="entry name" value="muta_rot_YjhT"/>
    <property type="match status" value="1"/>
</dbReference>
<dbReference type="NCBIfam" id="NF010730">
    <property type="entry name" value="PRK14131.1"/>
    <property type="match status" value="1"/>
</dbReference>
<dbReference type="PANTHER" id="PTHR45632">
    <property type="entry name" value="LD33804P"/>
    <property type="match status" value="1"/>
</dbReference>
<dbReference type="Pfam" id="PF24996">
    <property type="entry name" value="NANM"/>
    <property type="match status" value="1"/>
</dbReference>
<dbReference type="SUPFAM" id="SSF117281">
    <property type="entry name" value="Kelch motif"/>
    <property type="match status" value="1"/>
</dbReference>
<protein>
    <recommendedName>
        <fullName evidence="1">N-acetylneuraminate epimerase</fullName>
        <ecNumber evidence="1">5.1.3.24</ecNumber>
    </recommendedName>
    <alternativeName>
        <fullName evidence="1">N-acetylneuraminate mutarotase</fullName>
        <shortName evidence="1">Neu5Ac mutarotase</shortName>
    </alternativeName>
    <alternativeName>
        <fullName evidence="1">Sialic acid epimerase</fullName>
    </alternativeName>
</protein>
<accession>A5UB03</accession>
<organism>
    <name type="scientific">Haemophilus influenzae (strain PittEE)</name>
    <dbReference type="NCBI Taxonomy" id="374930"/>
    <lineage>
        <taxon>Bacteria</taxon>
        <taxon>Pseudomonadati</taxon>
        <taxon>Pseudomonadota</taxon>
        <taxon>Gammaproteobacteria</taxon>
        <taxon>Pasteurellales</taxon>
        <taxon>Pasteurellaceae</taxon>
        <taxon>Haemophilus</taxon>
    </lineage>
</organism>
<sequence length="375" mass="40358">MKLTKTALCTALFATFTFSANAQTYPDLPVGIKGGTGALIGDTVYVGLGSGGDKFYTLDLKDPSAQWKEIATFPGGERNQPVAAAVDGKLYVFGGLQKNEKGELQLVNDAYRYNPSDNTWMKLPTRSPRGLVGSSGASHGDKVYILGGSNLSIFNGFFQDNVAAGEDQAKKDEIAAAYFDQRPEDYFFTTELLSYEPSTNKWRNEGRIPFSGRAGAAFTIQGNDLVVVNGEIKPGLRTAETHQGKFTAKGVQWKNLPDLPAPKGKSQDGLAGALSGYSNGHYLVTGGANFPGSIKQYKEGKLHAHKGLSKAWHNEVYTLNNGKWRIVGELPMNIGYGFSVSYNNKVLLIGGETDGGKALTSVKAISYDGKKLTIE</sequence>
<evidence type="ECO:0000255" key="1">
    <source>
        <dbReference type="HAMAP-Rule" id="MF_01195"/>
    </source>
</evidence>
<comment type="function">
    <text evidence="1">Converts alpha-N-acetylneuranimic acid (Neu5Ac) to the beta-anomer, accelerating the equilibrium between the alpha- and beta-anomers. Probably facilitates sialidase-negative bacteria to compete successfully for limited amounts of extracellular Neu5Ac, which is likely taken up in the beta-anomer. In addition, the rapid removal of sialic acid from solution might be advantageous to the bacterium to damp down host responses.</text>
</comment>
<comment type="catalytic activity">
    <reaction evidence="1">
        <text>N-acetyl-alpha-neuraminate = N-acetyl-beta-neuraminate</text>
        <dbReference type="Rhea" id="RHEA:25233"/>
        <dbReference type="ChEBI" id="CHEBI:58705"/>
        <dbReference type="ChEBI" id="CHEBI:58770"/>
        <dbReference type="EC" id="5.1.3.24"/>
    </reaction>
</comment>
<comment type="subunit">
    <text evidence="1">Homodimer.</text>
</comment>
<comment type="subcellular location">
    <subcellularLocation>
        <location evidence="1">Periplasm</location>
    </subcellularLocation>
</comment>
<comment type="similarity">
    <text evidence="1">Belongs to the NanM family.</text>
</comment>
<feature type="signal peptide" evidence="1">
    <location>
        <begin position="1"/>
        <end position="22"/>
    </location>
</feature>
<feature type="chain" id="PRO_0000333062" description="N-acetylneuraminate epimerase">
    <location>
        <begin position="23"/>
        <end position="375"/>
    </location>
</feature>
<feature type="repeat" description="Kelch 1">
    <location>
        <begin position="43"/>
        <end position="87"/>
    </location>
</feature>
<feature type="repeat" description="Kelch 2">
    <location>
        <begin position="89"/>
        <end position="140"/>
    </location>
</feature>
<feature type="repeat" description="Kelch 3">
    <location>
        <begin position="142"/>
        <end position="176"/>
    </location>
</feature>
<feature type="repeat" description="Kelch 4">
    <location>
        <begin position="177"/>
        <end position="222"/>
    </location>
</feature>
<feature type="repeat" description="Kelch 5">
    <location>
        <begin position="225"/>
        <end position="273"/>
    </location>
</feature>
<feature type="repeat" description="Kelch 6">
    <location>
        <begin position="295"/>
        <end position="344"/>
    </location>
</feature>
<feature type="repeat" description="Kelch 7">
    <location>
        <begin position="346"/>
        <end position="375"/>
    </location>
</feature>
<feature type="active site" description="Proton acceptor" evidence="1">
    <location>
        <position position="231"/>
    </location>
</feature>
<reference key="1">
    <citation type="journal article" date="2007" name="Genome Biol.">
        <title>Characterization and modeling of the Haemophilus influenzae core and supragenomes based on the complete genomic sequences of Rd and 12 clinical nontypeable strains.</title>
        <authorList>
            <person name="Hogg J.S."/>
            <person name="Hu F.Z."/>
            <person name="Janto B."/>
            <person name="Boissy R."/>
            <person name="Hayes J."/>
            <person name="Keefe R."/>
            <person name="Post J.C."/>
            <person name="Ehrlich G.D."/>
        </authorList>
    </citation>
    <scope>NUCLEOTIDE SEQUENCE [LARGE SCALE GENOMIC DNA]</scope>
    <source>
        <strain>PittEE</strain>
    </source>
</reference>
<gene>
    <name evidence="1" type="primary">nanM</name>
    <name type="ordered locus">CGSHiEE_02545</name>
</gene>
<name>NANM_HAEIE</name>
<keyword id="KW-0119">Carbohydrate metabolism</keyword>
<keyword id="KW-0413">Isomerase</keyword>
<keyword id="KW-0880">Kelch repeat</keyword>
<keyword id="KW-0574">Periplasm</keyword>
<keyword id="KW-0677">Repeat</keyword>
<keyword id="KW-0732">Signal</keyword>